<gene>
    <name type="primary">TFIIB1</name>
</gene>
<sequence>MSDAFCSDCKRQTEVVFDHSAGDTVCSECGLVLESHSIDETSEWRTFANESGDNDPNRVGGPSNPLLTDGGLSTVIAKPNGGGGGEFLSSSLGRWQNRGSNPDRALIQAFKTIATMSDRLGLVATIKDRANEIYKRVEDQKSSRGRNQDALLAACLYIACRQEDKPRTVKEICSVANGATKKEIGRAKEYIVKQLGLENGNAVEMGTIHAGDFMRRFCSNLCMNNQAVKAAQEAVQKSEEFDIRRSPISIAAAVIYIITQLSDDKKPLKDISLATGVAEGTIRNSYKDLYPHVSKIIPNWYAKEEDLKNLCSP</sequence>
<keyword id="KW-0479">Metal-binding</keyword>
<keyword id="KW-0539">Nucleus</keyword>
<keyword id="KW-1185">Reference proteome</keyword>
<keyword id="KW-0677">Repeat</keyword>
<keyword id="KW-0804">Transcription</keyword>
<keyword id="KW-0805">Transcription regulation</keyword>
<keyword id="KW-0862">Zinc</keyword>
<keyword id="KW-0863">Zinc-finger</keyword>
<name>TF2B_SOYBN</name>
<dbReference type="EMBL" id="U31097">
    <property type="protein sequence ID" value="AAB09756.1"/>
    <property type="molecule type" value="mRNA"/>
</dbReference>
<dbReference type="PIR" id="T06440">
    <property type="entry name" value="T06440"/>
</dbReference>
<dbReference type="RefSeq" id="NP_001238343.1">
    <property type="nucleotide sequence ID" value="NM_001251414.1"/>
</dbReference>
<dbReference type="SMR" id="P48513"/>
<dbReference type="FunCoup" id="P48513">
    <property type="interactions" value="6192"/>
</dbReference>
<dbReference type="STRING" id="3847.P48513"/>
<dbReference type="PaxDb" id="3847-GLYMA10G15700.1"/>
<dbReference type="EnsemblPlants" id="KRH33227">
    <property type="protein sequence ID" value="KRH33227"/>
    <property type="gene ID" value="GLYMA_10G108600"/>
</dbReference>
<dbReference type="GeneID" id="548070"/>
<dbReference type="Gramene" id="KRH33227">
    <property type="protein sequence ID" value="KRH33227"/>
    <property type="gene ID" value="GLYMA_10G108600"/>
</dbReference>
<dbReference type="KEGG" id="gmx:548070"/>
<dbReference type="eggNOG" id="KOG1597">
    <property type="taxonomic scope" value="Eukaryota"/>
</dbReference>
<dbReference type="HOGENOM" id="CLU_043736_1_1_1"/>
<dbReference type="InParanoid" id="P48513"/>
<dbReference type="OMA" id="DHDQRMK"/>
<dbReference type="OrthoDB" id="25790at2759"/>
<dbReference type="Proteomes" id="UP000008827">
    <property type="component" value="Chromosome 10"/>
</dbReference>
<dbReference type="GO" id="GO:0005634">
    <property type="term" value="C:nucleus"/>
    <property type="evidence" value="ECO:0000318"/>
    <property type="project" value="GO_Central"/>
</dbReference>
<dbReference type="GO" id="GO:0097550">
    <property type="term" value="C:transcription preinitiation complex"/>
    <property type="evidence" value="ECO:0000318"/>
    <property type="project" value="GO_Central"/>
</dbReference>
<dbReference type="GO" id="GO:0016251">
    <property type="term" value="F:RNA polymerase II general transcription initiation factor activity"/>
    <property type="evidence" value="ECO:0000318"/>
    <property type="project" value="GO_Central"/>
</dbReference>
<dbReference type="GO" id="GO:0017025">
    <property type="term" value="F:TBP-class protein binding"/>
    <property type="evidence" value="ECO:0000318"/>
    <property type="project" value="GO_Central"/>
</dbReference>
<dbReference type="GO" id="GO:0008270">
    <property type="term" value="F:zinc ion binding"/>
    <property type="evidence" value="ECO:0007669"/>
    <property type="project" value="UniProtKB-KW"/>
</dbReference>
<dbReference type="GO" id="GO:0006352">
    <property type="term" value="P:DNA-templated transcription initiation"/>
    <property type="evidence" value="ECO:0000318"/>
    <property type="project" value="GO_Central"/>
</dbReference>
<dbReference type="GO" id="GO:0070897">
    <property type="term" value="P:transcription preinitiation complex assembly"/>
    <property type="evidence" value="ECO:0007669"/>
    <property type="project" value="InterPro"/>
</dbReference>
<dbReference type="CDD" id="cd20551">
    <property type="entry name" value="CYCLIN_TFIIB_rpt1"/>
    <property type="match status" value="1"/>
</dbReference>
<dbReference type="FunFam" id="1.10.472.10:FF:000043">
    <property type="entry name" value="Transcription initiation factor IIB"/>
    <property type="match status" value="1"/>
</dbReference>
<dbReference type="FunFam" id="1.10.472.170:FF:000002">
    <property type="entry name" value="Transcription initiation factor IIB"/>
    <property type="match status" value="1"/>
</dbReference>
<dbReference type="FunFam" id="1.10.472.10:FF:000019">
    <property type="entry name" value="transcription initiation factor IIB"/>
    <property type="match status" value="1"/>
</dbReference>
<dbReference type="Gene3D" id="1.10.472.170">
    <property type="match status" value="1"/>
</dbReference>
<dbReference type="Gene3D" id="1.10.472.10">
    <property type="entry name" value="Cyclin-like"/>
    <property type="match status" value="1"/>
</dbReference>
<dbReference type="InterPro" id="IPR013763">
    <property type="entry name" value="Cyclin-like_dom"/>
</dbReference>
<dbReference type="InterPro" id="IPR036915">
    <property type="entry name" value="Cyclin-like_sf"/>
</dbReference>
<dbReference type="InterPro" id="IPR000812">
    <property type="entry name" value="TFIIB"/>
</dbReference>
<dbReference type="InterPro" id="IPR023486">
    <property type="entry name" value="TFIIB_CS"/>
</dbReference>
<dbReference type="InterPro" id="IPR013150">
    <property type="entry name" value="TFIIB_cyclin"/>
</dbReference>
<dbReference type="InterPro" id="IPR013137">
    <property type="entry name" value="Znf_TFIIB"/>
</dbReference>
<dbReference type="PANTHER" id="PTHR11618:SF82">
    <property type="entry name" value="TRANSCRIPTION INITIATION FACTOR IIB-1"/>
    <property type="match status" value="1"/>
</dbReference>
<dbReference type="PANTHER" id="PTHR11618">
    <property type="entry name" value="TRANSCRIPTION INITIATION FACTOR IIB-RELATED"/>
    <property type="match status" value="1"/>
</dbReference>
<dbReference type="Pfam" id="PF00382">
    <property type="entry name" value="TFIIB"/>
    <property type="match status" value="2"/>
</dbReference>
<dbReference type="Pfam" id="PF08271">
    <property type="entry name" value="Zn_Ribbon_TF"/>
    <property type="match status" value="1"/>
</dbReference>
<dbReference type="PRINTS" id="PR00685">
    <property type="entry name" value="TIFACTORIIB"/>
</dbReference>
<dbReference type="SMART" id="SM00385">
    <property type="entry name" value="CYCLIN"/>
    <property type="match status" value="2"/>
</dbReference>
<dbReference type="SUPFAM" id="SSF47954">
    <property type="entry name" value="Cyclin-like"/>
    <property type="match status" value="2"/>
</dbReference>
<dbReference type="SUPFAM" id="SSF57783">
    <property type="entry name" value="Zinc beta-ribbon"/>
    <property type="match status" value="1"/>
</dbReference>
<dbReference type="PROSITE" id="PS00782">
    <property type="entry name" value="TFIIB"/>
    <property type="match status" value="1"/>
</dbReference>
<dbReference type="PROSITE" id="PS51134">
    <property type="entry name" value="ZF_TFIIB"/>
    <property type="match status" value="1"/>
</dbReference>
<proteinExistence type="evidence at transcript level"/>
<organism>
    <name type="scientific">Glycine max</name>
    <name type="common">Soybean</name>
    <name type="synonym">Glycine hispida</name>
    <dbReference type="NCBI Taxonomy" id="3847"/>
    <lineage>
        <taxon>Eukaryota</taxon>
        <taxon>Viridiplantae</taxon>
        <taxon>Streptophyta</taxon>
        <taxon>Embryophyta</taxon>
        <taxon>Tracheophyta</taxon>
        <taxon>Spermatophyta</taxon>
        <taxon>Magnoliopsida</taxon>
        <taxon>eudicotyledons</taxon>
        <taxon>Gunneridae</taxon>
        <taxon>Pentapetalae</taxon>
        <taxon>rosids</taxon>
        <taxon>fabids</taxon>
        <taxon>Fabales</taxon>
        <taxon>Fabaceae</taxon>
        <taxon>Papilionoideae</taxon>
        <taxon>50 kb inversion clade</taxon>
        <taxon>NPAAA clade</taxon>
        <taxon>indigoferoid/millettioid clade</taxon>
        <taxon>Phaseoleae</taxon>
        <taxon>Glycine</taxon>
        <taxon>Glycine subgen. Soja</taxon>
    </lineage>
</organism>
<evidence type="ECO:0000255" key="1">
    <source>
        <dbReference type="PROSITE-ProRule" id="PRU00469"/>
    </source>
</evidence>
<evidence type="ECO:0000305" key="2"/>
<accession>P48513</accession>
<feature type="chain" id="PRO_0000119304" description="Transcription initiation factor IIB">
    <location>
        <begin position="1"/>
        <end position="313"/>
    </location>
</feature>
<feature type="repeat" description="1">
    <location>
        <begin position="116"/>
        <end position="193"/>
    </location>
</feature>
<feature type="repeat" description="2">
    <location>
        <begin position="217"/>
        <end position="291"/>
    </location>
</feature>
<feature type="zinc finger region" description="TFIIB-type" evidence="1">
    <location>
        <begin position="2"/>
        <end position="34"/>
    </location>
</feature>
<feature type="binding site" evidence="1">
    <location>
        <position position="6"/>
    </location>
    <ligand>
        <name>Zn(2+)</name>
        <dbReference type="ChEBI" id="CHEBI:29105"/>
    </ligand>
</feature>
<feature type="binding site" evidence="1">
    <location>
        <position position="9"/>
    </location>
    <ligand>
        <name>Zn(2+)</name>
        <dbReference type="ChEBI" id="CHEBI:29105"/>
    </ligand>
</feature>
<feature type="binding site" evidence="1">
    <location>
        <position position="26"/>
    </location>
    <ligand>
        <name>Zn(2+)</name>
        <dbReference type="ChEBI" id="CHEBI:29105"/>
    </ligand>
</feature>
<feature type="binding site" evidence="1">
    <location>
        <position position="29"/>
    </location>
    <ligand>
        <name>Zn(2+)</name>
        <dbReference type="ChEBI" id="CHEBI:29105"/>
    </ligand>
</feature>
<protein>
    <recommendedName>
        <fullName>Transcription initiation factor IIB</fullName>
    </recommendedName>
    <alternativeName>
        <fullName>General transcription factor TFIIB</fullName>
    </alternativeName>
</protein>
<comment type="function">
    <text>General factor that plays a major role in the activation of eukaryotic genes transcribed by RNA polymerase II.</text>
</comment>
<comment type="subunit">
    <text>Associates with TFIID-IIA (DA complex) to form TFIID-IIA-IIB (DAB-complex) which is then recognized by polymerase II.</text>
</comment>
<comment type="subcellular location">
    <subcellularLocation>
        <location>Nucleus</location>
    </subcellularLocation>
</comment>
<comment type="similarity">
    <text evidence="2">Belongs to the TFIIB family.</text>
</comment>
<reference key="1">
    <citation type="journal article" date="1996" name="Plant J.">
        <title>Isolation and characterization of cDNAs encoding transcription factor IIB from Arabidopsis and soybean.</title>
        <authorList>
            <person name="Baldwin D.A."/>
            <person name="Gurley W.B."/>
        </authorList>
    </citation>
    <scope>NUCLEOTIDE SEQUENCE [MRNA]</scope>
</reference>